<feature type="chain" id="PRO_0000174350" description="GDP-L-fucose synthase">
    <location>
        <begin position="1"/>
        <end position="321"/>
    </location>
</feature>
<feature type="active site" description="Proton donor/acceptor" evidence="1">
    <location>
        <position position="143"/>
    </location>
</feature>
<feature type="binding site" evidence="2 4">
    <location>
        <begin position="14"/>
        <end position="20"/>
    </location>
    <ligand>
        <name>NADP(+)</name>
        <dbReference type="ChEBI" id="CHEBI:58349"/>
    </ligand>
</feature>
<feature type="binding site" evidence="2 4">
    <location>
        <position position="147"/>
    </location>
    <ligand>
        <name>NADP(+)</name>
        <dbReference type="ChEBI" id="CHEBI:58349"/>
    </ligand>
</feature>
<feature type="binding site" evidence="2 4">
    <location>
        <begin position="170"/>
        <end position="173"/>
    </location>
    <ligand>
        <name>NADP(+)</name>
        <dbReference type="ChEBI" id="CHEBI:58349"/>
    </ligand>
</feature>
<feature type="binding site" evidence="4">
    <location>
        <position position="186"/>
    </location>
    <ligand>
        <name>NADP(+)</name>
        <dbReference type="ChEBI" id="CHEBI:58349"/>
    </ligand>
</feature>
<feature type="binding site" evidence="6">
    <location>
        <position position="194"/>
    </location>
    <ligand>
        <name>substrate</name>
    </ligand>
</feature>
<feature type="binding site" evidence="6">
    <location>
        <position position="208"/>
    </location>
    <ligand>
        <name>substrate</name>
    </ligand>
</feature>
<feature type="binding site" evidence="6">
    <location>
        <position position="215"/>
    </location>
    <ligand>
        <name>substrate</name>
    </ligand>
</feature>
<feature type="binding site" evidence="6">
    <location>
        <position position="277"/>
    </location>
    <ligand>
        <name>substrate</name>
    </ligand>
</feature>
<feature type="site" description="Important for catalytic activity" evidence="1">
    <location>
        <position position="114"/>
    </location>
</feature>
<feature type="site" description="Important for catalytic activity" evidence="1">
    <location>
        <position position="116"/>
    </location>
</feature>
<feature type="site" description="Lowers pKa of active site Tyr" evidence="1">
    <location>
        <position position="147"/>
    </location>
</feature>
<feature type="sequence conflict" description="In Ref. 5; AA sequence." evidence="5" ref="5">
    <original>Q</original>
    <variation>E</variation>
    <location>
        <position position="5"/>
    </location>
</feature>
<feature type="strand" evidence="11">
    <location>
        <begin position="9"/>
        <end position="13"/>
    </location>
</feature>
<feature type="turn" evidence="11">
    <location>
        <begin position="14"/>
        <end position="16"/>
    </location>
</feature>
<feature type="helix" evidence="11">
    <location>
        <begin position="18"/>
        <end position="23"/>
    </location>
</feature>
<feature type="turn" evidence="11">
    <location>
        <begin position="27"/>
        <end position="29"/>
    </location>
</feature>
<feature type="strand" evidence="11">
    <location>
        <begin position="37"/>
        <end position="40"/>
    </location>
</feature>
<feature type="strand" evidence="11">
    <location>
        <begin position="43"/>
        <end position="46"/>
    </location>
</feature>
<feature type="helix" evidence="11">
    <location>
        <begin position="51"/>
        <end position="60"/>
    </location>
</feature>
<feature type="strand" evidence="11">
    <location>
        <begin position="64"/>
        <end position="68"/>
    </location>
</feature>
<feature type="turn" evidence="9">
    <location>
        <begin position="74"/>
        <end position="77"/>
    </location>
</feature>
<feature type="strand" evidence="11">
    <location>
        <begin position="78"/>
        <end position="80"/>
    </location>
</feature>
<feature type="helix" evidence="11">
    <location>
        <begin position="83"/>
        <end position="103"/>
    </location>
</feature>
<feature type="strand" evidence="11">
    <location>
        <begin position="107"/>
        <end position="112"/>
    </location>
</feature>
<feature type="helix" evidence="11">
    <location>
        <begin position="115"/>
        <end position="117"/>
    </location>
</feature>
<feature type="strand" evidence="11">
    <location>
        <begin position="118"/>
        <end position="121"/>
    </location>
</feature>
<feature type="strand" evidence="11">
    <location>
        <begin position="124"/>
        <end position="126"/>
    </location>
</feature>
<feature type="helix" evidence="11">
    <location>
        <begin position="128"/>
        <end position="130"/>
    </location>
</feature>
<feature type="strand" evidence="8">
    <location>
        <begin position="138"/>
        <end position="140"/>
    </location>
</feature>
<feature type="helix" evidence="11">
    <location>
        <begin position="141"/>
        <end position="161"/>
    </location>
</feature>
<feature type="strand" evidence="11">
    <location>
        <begin position="164"/>
        <end position="170"/>
    </location>
</feature>
<feature type="strand" evidence="11">
    <location>
        <begin position="172"/>
        <end position="175"/>
    </location>
</feature>
<feature type="turn" evidence="11">
    <location>
        <begin position="182"/>
        <end position="184"/>
    </location>
</feature>
<feature type="helix" evidence="11">
    <location>
        <begin position="187"/>
        <end position="199"/>
    </location>
</feature>
<feature type="strand" evidence="11">
    <location>
        <begin position="201"/>
        <end position="203"/>
    </location>
</feature>
<feature type="strand" evidence="11">
    <location>
        <begin position="207"/>
        <end position="209"/>
    </location>
</feature>
<feature type="strand" evidence="11">
    <location>
        <begin position="217"/>
        <end position="219"/>
    </location>
</feature>
<feature type="helix" evidence="11">
    <location>
        <begin position="220"/>
        <end position="232"/>
    </location>
</feature>
<feature type="strand" evidence="11">
    <location>
        <begin position="240"/>
        <end position="242"/>
    </location>
</feature>
<feature type="helix" evidence="10">
    <location>
        <begin position="246"/>
        <end position="248"/>
    </location>
</feature>
<feature type="helix" evidence="11">
    <location>
        <begin position="252"/>
        <end position="263"/>
    </location>
</feature>
<feature type="strand" evidence="10">
    <location>
        <begin position="269"/>
        <end position="272"/>
    </location>
</feature>
<feature type="helix" evidence="11">
    <location>
        <begin position="287"/>
        <end position="292"/>
    </location>
</feature>
<feature type="helix" evidence="11">
    <location>
        <begin position="301"/>
        <end position="314"/>
    </location>
</feature>
<feature type="turn" evidence="11">
    <location>
        <begin position="315"/>
        <end position="318"/>
    </location>
</feature>
<comment type="function">
    <text evidence="3">Catalyzes the two-step NADP-dependent conversion of GDP-4-dehydro-6-deoxy-D-mannose to GDP-fucose, involving an epimerase and a reductase reaction.</text>
</comment>
<comment type="catalytic activity">
    <reaction evidence="3">
        <text>GDP-beta-L-fucose + NADP(+) = GDP-4-dehydro-alpha-D-rhamnose + NADPH + H(+)</text>
        <dbReference type="Rhea" id="RHEA:18885"/>
        <dbReference type="ChEBI" id="CHEBI:15378"/>
        <dbReference type="ChEBI" id="CHEBI:57273"/>
        <dbReference type="ChEBI" id="CHEBI:57783"/>
        <dbReference type="ChEBI" id="CHEBI:57964"/>
        <dbReference type="ChEBI" id="CHEBI:58349"/>
        <dbReference type="EC" id="1.1.1.271"/>
    </reaction>
</comment>
<comment type="pathway">
    <text evidence="3">Nucleotide-sugar biosynthesis; GDP-L-fucose biosynthesis via de novo pathway; GDP-L-fucose from GDP-alpha-D-mannose: step 2/2.</text>
</comment>
<comment type="subunit">
    <text evidence="2 3">Homodimer.</text>
</comment>
<comment type="interaction">
    <interactant intactId="EBI-3910586">
        <id>Q13630</id>
    </interactant>
    <interactant intactId="EBI-12357161">
        <id>Q5SYC1</id>
        <label>CLVS2</label>
    </interactant>
    <organismsDiffer>false</organismsDiffer>
    <experiments>3</experiments>
</comment>
<comment type="interaction">
    <interactant intactId="EBI-3910586">
        <id>Q13630</id>
    </interactant>
    <interactant intactId="EBI-3910586">
        <id>Q13630</id>
        <label>GFUS</label>
    </interactant>
    <organismsDiffer>false</organismsDiffer>
    <experiments>4</experiments>
</comment>
<comment type="similarity">
    <text evidence="5">Belongs to the NAD(P)-dependent epimerase/dehydratase family. Fucose synthase subfamily.</text>
</comment>
<dbReference type="EC" id="1.1.1.271" evidence="3"/>
<dbReference type="EMBL" id="U58766">
    <property type="protein sequence ID" value="AAC50786.1"/>
    <property type="molecule type" value="mRNA"/>
</dbReference>
<dbReference type="EMBL" id="AK313560">
    <property type="protein sequence ID" value="BAG36334.1"/>
    <property type="molecule type" value="mRNA"/>
</dbReference>
<dbReference type="EMBL" id="CH471162">
    <property type="protein sequence ID" value="EAW82218.1"/>
    <property type="molecule type" value="Genomic_DNA"/>
</dbReference>
<dbReference type="EMBL" id="CH471162">
    <property type="protein sequence ID" value="EAW82220.1"/>
    <property type="molecule type" value="Genomic_DNA"/>
</dbReference>
<dbReference type="EMBL" id="CH471162">
    <property type="protein sequence ID" value="EAW82222.1"/>
    <property type="molecule type" value="Genomic_DNA"/>
</dbReference>
<dbReference type="EMBL" id="BC001941">
    <property type="protein sequence ID" value="AAH01941.1"/>
    <property type="molecule type" value="mRNA"/>
</dbReference>
<dbReference type="EMBL" id="BC093061">
    <property type="protein sequence ID" value="AAH93061.1"/>
    <property type="molecule type" value="mRNA"/>
</dbReference>
<dbReference type="CCDS" id="CCDS6408.1"/>
<dbReference type="RefSeq" id="NP_001304712.1">
    <property type="nucleotide sequence ID" value="NM_001317783.1"/>
</dbReference>
<dbReference type="RefSeq" id="NP_001400337.1">
    <property type="nucleotide sequence ID" value="NM_001413408.1"/>
</dbReference>
<dbReference type="RefSeq" id="NP_003304.1">
    <property type="nucleotide sequence ID" value="NM_003313.4"/>
</dbReference>
<dbReference type="RefSeq" id="XP_005251108.2">
    <property type="nucleotide sequence ID" value="XM_005251051.3"/>
</dbReference>
<dbReference type="RefSeq" id="XP_011515571.1">
    <property type="nucleotide sequence ID" value="XM_011517269.1"/>
</dbReference>
<dbReference type="PDB" id="4B8W">
    <property type="method" value="X-ray"/>
    <property type="resolution" value="2.75 A"/>
    <property type="chains" value="A/B=7-320"/>
</dbReference>
<dbReference type="PDB" id="4B8Z">
    <property type="method" value="X-ray"/>
    <property type="resolution" value="2.75 A"/>
    <property type="chains" value="A/B/C/D=8-320"/>
</dbReference>
<dbReference type="PDB" id="4BKP">
    <property type="method" value="X-ray"/>
    <property type="resolution" value="2.70 A"/>
    <property type="chains" value="A/B/C/D=8-321"/>
</dbReference>
<dbReference type="PDB" id="4BL5">
    <property type="method" value="X-ray"/>
    <property type="resolution" value="2.60 A"/>
    <property type="chains" value="A/B/C/D/E/F/G/H/I/J/K/L=8-321"/>
</dbReference>
<dbReference type="PDB" id="4E5Y">
    <property type="method" value="X-ray"/>
    <property type="resolution" value="2.37 A"/>
    <property type="chains" value="A/B/C/D=1-321"/>
</dbReference>
<dbReference type="PDBsum" id="4B8W"/>
<dbReference type="PDBsum" id="4B8Z"/>
<dbReference type="PDBsum" id="4BKP"/>
<dbReference type="PDBsum" id="4BL5"/>
<dbReference type="PDBsum" id="4E5Y"/>
<dbReference type="SMR" id="Q13630"/>
<dbReference type="BioGRID" id="113115">
    <property type="interactions" value="50"/>
</dbReference>
<dbReference type="FunCoup" id="Q13630">
    <property type="interactions" value="740"/>
</dbReference>
<dbReference type="IntAct" id="Q13630">
    <property type="interactions" value="12"/>
</dbReference>
<dbReference type="MINT" id="Q13630"/>
<dbReference type="STRING" id="9606.ENSP00000398803"/>
<dbReference type="DrugBank" id="DB00157">
    <property type="generic name" value="NADH"/>
</dbReference>
<dbReference type="GlyGen" id="Q13630">
    <property type="glycosylation" value="1 site, 1 O-linked glycan (1 site)"/>
</dbReference>
<dbReference type="iPTMnet" id="Q13630"/>
<dbReference type="PhosphoSitePlus" id="Q13630"/>
<dbReference type="SwissPalm" id="Q13630"/>
<dbReference type="BioMuta" id="TSTA3"/>
<dbReference type="DMDM" id="13124123"/>
<dbReference type="REPRODUCTION-2DPAGE" id="IPI00014361"/>
<dbReference type="jPOST" id="Q13630"/>
<dbReference type="MassIVE" id="Q13630"/>
<dbReference type="PaxDb" id="9606-ENSP00000398803"/>
<dbReference type="PeptideAtlas" id="Q13630"/>
<dbReference type="ProteomicsDB" id="59624"/>
<dbReference type="Pumba" id="Q13630"/>
<dbReference type="Antibodypedia" id="14656">
    <property type="antibodies" value="321 antibodies from 31 providers"/>
</dbReference>
<dbReference type="DNASU" id="7264"/>
<dbReference type="Ensembl" id="ENST00000425753.7">
    <property type="protein sequence ID" value="ENSP00000398803.2"/>
    <property type="gene ID" value="ENSG00000104522.16"/>
</dbReference>
<dbReference type="Ensembl" id="ENST00000529064.5">
    <property type="protein sequence ID" value="ENSP00000435386.1"/>
    <property type="gene ID" value="ENSG00000104522.16"/>
</dbReference>
<dbReference type="Ensembl" id="ENST00000612580.2">
    <property type="protein sequence ID" value="ENSP00000478042.1"/>
    <property type="gene ID" value="ENSG00000278243.2"/>
</dbReference>
<dbReference type="Ensembl" id="ENST00000633782.1">
    <property type="protein sequence ID" value="ENSP00000487640.1"/>
    <property type="gene ID" value="ENSG00000278243.2"/>
</dbReference>
<dbReference type="GeneID" id="7264"/>
<dbReference type="KEGG" id="hsa:7264"/>
<dbReference type="MANE-Select" id="ENST00000425753.7">
    <property type="protein sequence ID" value="ENSP00000398803.2"/>
    <property type="RefSeq nucleotide sequence ID" value="NM_003313.4"/>
    <property type="RefSeq protein sequence ID" value="NP_003304.1"/>
</dbReference>
<dbReference type="UCSC" id="uc003yza.3">
    <property type="organism name" value="human"/>
</dbReference>
<dbReference type="AGR" id="HGNC:12390"/>
<dbReference type="CTD" id="7264"/>
<dbReference type="DisGeNET" id="7264"/>
<dbReference type="GeneCards" id="GFUS"/>
<dbReference type="HGNC" id="HGNC:12390">
    <property type="gene designation" value="GFUS"/>
</dbReference>
<dbReference type="HPA" id="ENSG00000104522">
    <property type="expression patterns" value="Low tissue specificity"/>
</dbReference>
<dbReference type="MalaCards" id="GFUS"/>
<dbReference type="MIM" id="137020">
    <property type="type" value="gene"/>
</dbReference>
<dbReference type="neXtProt" id="NX_Q13630"/>
<dbReference type="OpenTargets" id="ENSG00000104522"/>
<dbReference type="PharmGKB" id="PA37056"/>
<dbReference type="VEuPathDB" id="HostDB:ENSG00000104522"/>
<dbReference type="eggNOG" id="KOG1431">
    <property type="taxonomic scope" value="Eukaryota"/>
</dbReference>
<dbReference type="GeneTree" id="ENSGT00390000004681"/>
<dbReference type="InParanoid" id="Q13630"/>
<dbReference type="OMA" id="HPSNYGY"/>
<dbReference type="OrthoDB" id="202470at2759"/>
<dbReference type="PAN-GO" id="Q13630">
    <property type="GO annotations" value="1 GO annotation based on evolutionary models"/>
</dbReference>
<dbReference type="PhylomeDB" id="Q13630"/>
<dbReference type="TreeFam" id="TF314936"/>
<dbReference type="PathwayCommons" id="Q13630"/>
<dbReference type="Reactome" id="R-HSA-6787639">
    <property type="pathway name" value="GDP-fucose biosynthesis"/>
</dbReference>
<dbReference type="SignaLink" id="Q13630"/>
<dbReference type="UniPathway" id="UPA00128">
    <property type="reaction ID" value="UER00191"/>
</dbReference>
<dbReference type="BioGRID-ORCS" id="7264">
    <property type="hits" value="25 hits in 1159 CRISPR screens"/>
</dbReference>
<dbReference type="EvolutionaryTrace" id="Q13630"/>
<dbReference type="GeneWiki" id="TSTA3"/>
<dbReference type="GenomeRNAi" id="7264"/>
<dbReference type="Pharos" id="Q13630">
    <property type="development level" value="Tbio"/>
</dbReference>
<dbReference type="PRO" id="PR:Q13630"/>
<dbReference type="Proteomes" id="UP000005640">
    <property type="component" value="Chromosome 8"/>
</dbReference>
<dbReference type="RNAct" id="Q13630">
    <property type="molecule type" value="protein"/>
</dbReference>
<dbReference type="Bgee" id="ENSG00000104522">
    <property type="expression patterns" value="Expressed in body of stomach and 100 other cell types or tissues"/>
</dbReference>
<dbReference type="ExpressionAtlas" id="Q13630">
    <property type="expression patterns" value="baseline and differential"/>
</dbReference>
<dbReference type="GO" id="GO:0005829">
    <property type="term" value="C:cytosol"/>
    <property type="evidence" value="ECO:0000314"/>
    <property type="project" value="FlyBase"/>
</dbReference>
<dbReference type="GO" id="GO:0070062">
    <property type="term" value="C:extracellular exosome"/>
    <property type="evidence" value="ECO:0007005"/>
    <property type="project" value="UniProtKB"/>
</dbReference>
<dbReference type="GO" id="GO:0009055">
    <property type="term" value="F:electron transfer activity"/>
    <property type="evidence" value="ECO:0000304"/>
    <property type="project" value="UniProtKB"/>
</dbReference>
<dbReference type="GO" id="GO:0042356">
    <property type="term" value="F:GDP-4-dehydro-D-rhamnose reductase activity"/>
    <property type="evidence" value="ECO:0000304"/>
    <property type="project" value="UniProtKB"/>
</dbReference>
<dbReference type="GO" id="GO:0050577">
    <property type="term" value="F:GDP-L-fucose synthase activity"/>
    <property type="evidence" value="ECO:0000314"/>
    <property type="project" value="UniProtKB"/>
</dbReference>
<dbReference type="GO" id="GO:0047918">
    <property type="term" value="F:GDP-mannose 3,5-epimerase activity"/>
    <property type="evidence" value="ECO:0000314"/>
    <property type="project" value="FlyBase"/>
</dbReference>
<dbReference type="GO" id="GO:0042802">
    <property type="term" value="F:identical protein binding"/>
    <property type="evidence" value="ECO:0000353"/>
    <property type="project" value="IntAct"/>
</dbReference>
<dbReference type="GO" id="GO:0042351">
    <property type="term" value="P:'de novo' GDP-L-fucose biosynthetic process"/>
    <property type="evidence" value="ECO:0000314"/>
    <property type="project" value="UniProtKB"/>
</dbReference>
<dbReference type="GO" id="GO:0019673">
    <property type="term" value="P:GDP-mannose metabolic process"/>
    <property type="evidence" value="ECO:0000314"/>
    <property type="project" value="UniProtKB"/>
</dbReference>
<dbReference type="GO" id="GO:0007159">
    <property type="term" value="P:leukocyte cell-cell adhesion"/>
    <property type="evidence" value="ECO:0000303"/>
    <property type="project" value="UniProtKB"/>
</dbReference>
<dbReference type="GO" id="GO:0010595">
    <property type="term" value="P:positive regulation of endothelial cell migration"/>
    <property type="evidence" value="ECO:0000315"/>
    <property type="project" value="UniProtKB"/>
</dbReference>
<dbReference type="GO" id="GO:1904906">
    <property type="term" value="P:positive regulation of endothelial cell-matrix adhesion via fibronectin"/>
    <property type="evidence" value="ECO:0000315"/>
    <property type="project" value="UniProtKB"/>
</dbReference>
<dbReference type="GO" id="GO:0001913">
    <property type="term" value="P:T cell mediated cytotoxicity"/>
    <property type="evidence" value="ECO:0007669"/>
    <property type="project" value="Ensembl"/>
</dbReference>
<dbReference type="CDD" id="cd05239">
    <property type="entry name" value="GDP_FS_SDR_e"/>
    <property type="match status" value="1"/>
</dbReference>
<dbReference type="Gene3D" id="3.40.50.720">
    <property type="entry name" value="NAD(P)-binding Rossmann-like Domain"/>
    <property type="match status" value="1"/>
</dbReference>
<dbReference type="Gene3D" id="3.90.25.10">
    <property type="entry name" value="UDP-galactose 4-epimerase, domain 1"/>
    <property type="match status" value="1"/>
</dbReference>
<dbReference type="HAMAP" id="MF_00956">
    <property type="entry name" value="GDP_fucose_synth"/>
    <property type="match status" value="1"/>
</dbReference>
<dbReference type="InterPro" id="IPR001509">
    <property type="entry name" value="Epimerase_deHydtase"/>
</dbReference>
<dbReference type="InterPro" id="IPR028614">
    <property type="entry name" value="GDP_fucose/colitose_synth"/>
</dbReference>
<dbReference type="InterPro" id="IPR036291">
    <property type="entry name" value="NAD(P)-bd_dom_sf"/>
</dbReference>
<dbReference type="PANTHER" id="PTHR43238">
    <property type="entry name" value="GDP-L-FUCOSE SYNTHASE"/>
    <property type="match status" value="1"/>
</dbReference>
<dbReference type="PANTHER" id="PTHR43238:SF1">
    <property type="entry name" value="GDP-L-FUCOSE SYNTHASE"/>
    <property type="match status" value="1"/>
</dbReference>
<dbReference type="Pfam" id="PF01370">
    <property type="entry name" value="Epimerase"/>
    <property type="match status" value="1"/>
</dbReference>
<dbReference type="SUPFAM" id="SSF51735">
    <property type="entry name" value="NAD(P)-binding Rossmann-fold domains"/>
    <property type="match status" value="1"/>
</dbReference>
<name>FCL_HUMAN</name>
<sequence>MGEPQGSMRILVTGGSGLVGKAIQKVVADGAGLPGEDWVFVSSKDADLTDTAQTRALFEKVQPTHVIHLAAMVGGLFRNIKYNLDFWRKNVHMNDNVLHSAFEVGARKVVSCLSTCIFPDKTTYPIDETMIHNGPPHNSNFGYSYAKRMIDVQNRAYFQQYGCTFTAVIPTNVFGPHDNFNIEDGHVLPGLIHKVHLAKSSGSALTVWGTGNPRRQFIYSLDLAQLFIWVLREYNEVEPIILSVGEEDEVSIKEAAEAVVEAMDFHGEVTFDTTKSDGQFKKTASNSKLRTYLPDFRFTPFKQAVKETCAWFTDNYEQARK</sequence>
<gene>
    <name evidence="7" type="primary">GFUS</name>
    <name type="synonym">SDR4E1</name>
    <name type="synonym">TSTA3</name>
</gene>
<accession>Q13630</accession>
<accession>B2R8Y7</accession>
<accession>D3DWK5</accession>
<accession>Q567Q9</accession>
<accession>Q9UDG7</accession>
<reference key="1">
    <citation type="journal article" date="1996" name="J. Biol. Chem.">
        <title>Synthesis of GDP-L-fucose by the human FX protein.</title>
        <authorList>
            <person name="Tonetti M."/>
            <person name="Sturla L."/>
            <person name="Bisso A."/>
            <person name="Benatti U."/>
            <person name="De Flora A."/>
        </authorList>
    </citation>
    <scope>NUCLEOTIDE SEQUENCE [MRNA]</scope>
    <scope>FUNCTION</scope>
    <scope>SUBUNIT</scope>
    <source>
        <tissue>Placenta</tissue>
    </source>
</reference>
<reference key="2">
    <citation type="journal article" date="2004" name="Nat. Genet.">
        <title>Complete sequencing and characterization of 21,243 full-length human cDNAs.</title>
        <authorList>
            <person name="Ota T."/>
            <person name="Suzuki Y."/>
            <person name="Nishikawa T."/>
            <person name="Otsuki T."/>
            <person name="Sugiyama T."/>
            <person name="Irie R."/>
            <person name="Wakamatsu A."/>
            <person name="Hayashi K."/>
            <person name="Sato H."/>
            <person name="Nagai K."/>
            <person name="Kimura K."/>
            <person name="Makita H."/>
            <person name="Sekine M."/>
            <person name="Obayashi M."/>
            <person name="Nishi T."/>
            <person name="Shibahara T."/>
            <person name="Tanaka T."/>
            <person name="Ishii S."/>
            <person name="Yamamoto J."/>
            <person name="Saito K."/>
            <person name="Kawai Y."/>
            <person name="Isono Y."/>
            <person name="Nakamura Y."/>
            <person name="Nagahari K."/>
            <person name="Murakami K."/>
            <person name="Yasuda T."/>
            <person name="Iwayanagi T."/>
            <person name="Wagatsuma M."/>
            <person name="Shiratori A."/>
            <person name="Sudo H."/>
            <person name="Hosoiri T."/>
            <person name="Kaku Y."/>
            <person name="Kodaira H."/>
            <person name="Kondo H."/>
            <person name="Sugawara M."/>
            <person name="Takahashi M."/>
            <person name="Kanda K."/>
            <person name="Yokoi T."/>
            <person name="Furuya T."/>
            <person name="Kikkawa E."/>
            <person name="Omura Y."/>
            <person name="Abe K."/>
            <person name="Kamihara K."/>
            <person name="Katsuta N."/>
            <person name="Sato K."/>
            <person name="Tanikawa M."/>
            <person name="Yamazaki M."/>
            <person name="Ninomiya K."/>
            <person name="Ishibashi T."/>
            <person name="Yamashita H."/>
            <person name="Murakawa K."/>
            <person name="Fujimori K."/>
            <person name="Tanai H."/>
            <person name="Kimata M."/>
            <person name="Watanabe M."/>
            <person name="Hiraoka S."/>
            <person name="Chiba Y."/>
            <person name="Ishida S."/>
            <person name="Ono Y."/>
            <person name="Takiguchi S."/>
            <person name="Watanabe S."/>
            <person name="Yosida M."/>
            <person name="Hotuta T."/>
            <person name="Kusano J."/>
            <person name="Kanehori K."/>
            <person name="Takahashi-Fujii A."/>
            <person name="Hara H."/>
            <person name="Tanase T.-O."/>
            <person name="Nomura Y."/>
            <person name="Togiya S."/>
            <person name="Komai F."/>
            <person name="Hara R."/>
            <person name="Takeuchi K."/>
            <person name="Arita M."/>
            <person name="Imose N."/>
            <person name="Musashino K."/>
            <person name="Yuuki H."/>
            <person name="Oshima A."/>
            <person name="Sasaki N."/>
            <person name="Aotsuka S."/>
            <person name="Yoshikawa Y."/>
            <person name="Matsunawa H."/>
            <person name="Ichihara T."/>
            <person name="Shiohata N."/>
            <person name="Sano S."/>
            <person name="Moriya S."/>
            <person name="Momiyama H."/>
            <person name="Satoh N."/>
            <person name="Takami S."/>
            <person name="Terashima Y."/>
            <person name="Suzuki O."/>
            <person name="Nakagawa S."/>
            <person name="Senoh A."/>
            <person name="Mizoguchi H."/>
            <person name="Goto Y."/>
            <person name="Shimizu F."/>
            <person name="Wakebe H."/>
            <person name="Hishigaki H."/>
            <person name="Watanabe T."/>
            <person name="Sugiyama A."/>
            <person name="Takemoto M."/>
            <person name="Kawakami B."/>
            <person name="Yamazaki M."/>
            <person name="Watanabe K."/>
            <person name="Kumagai A."/>
            <person name="Itakura S."/>
            <person name="Fukuzumi Y."/>
            <person name="Fujimori Y."/>
            <person name="Komiyama M."/>
            <person name="Tashiro H."/>
            <person name="Tanigami A."/>
            <person name="Fujiwara T."/>
            <person name="Ono T."/>
            <person name="Yamada K."/>
            <person name="Fujii Y."/>
            <person name="Ozaki K."/>
            <person name="Hirao M."/>
            <person name="Ohmori Y."/>
            <person name="Kawabata A."/>
            <person name="Hikiji T."/>
            <person name="Kobatake N."/>
            <person name="Inagaki H."/>
            <person name="Ikema Y."/>
            <person name="Okamoto S."/>
            <person name="Okitani R."/>
            <person name="Kawakami T."/>
            <person name="Noguchi S."/>
            <person name="Itoh T."/>
            <person name="Shigeta K."/>
            <person name="Senba T."/>
            <person name="Matsumura K."/>
            <person name="Nakajima Y."/>
            <person name="Mizuno T."/>
            <person name="Morinaga M."/>
            <person name="Sasaki M."/>
            <person name="Togashi T."/>
            <person name="Oyama M."/>
            <person name="Hata H."/>
            <person name="Watanabe M."/>
            <person name="Komatsu T."/>
            <person name="Mizushima-Sugano J."/>
            <person name="Satoh T."/>
            <person name="Shirai Y."/>
            <person name="Takahashi Y."/>
            <person name="Nakagawa K."/>
            <person name="Okumura K."/>
            <person name="Nagase T."/>
            <person name="Nomura N."/>
            <person name="Kikuchi H."/>
            <person name="Masuho Y."/>
            <person name="Yamashita R."/>
            <person name="Nakai K."/>
            <person name="Yada T."/>
            <person name="Nakamura Y."/>
            <person name="Ohara O."/>
            <person name="Isogai T."/>
            <person name="Sugano S."/>
        </authorList>
    </citation>
    <scope>NUCLEOTIDE SEQUENCE [LARGE SCALE MRNA]</scope>
    <source>
        <tissue>Placenta</tissue>
    </source>
</reference>
<reference key="3">
    <citation type="submission" date="2005-09" db="EMBL/GenBank/DDBJ databases">
        <authorList>
            <person name="Mural R.J."/>
            <person name="Istrail S."/>
            <person name="Sutton G.G."/>
            <person name="Florea L."/>
            <person name="Halpern A.L."/>
            <person name="Mobarry C.M."/>
            <person name="Lippert R."/>
            <person name="Walenz B."/>
            <person name="Shatkay H."/>
            <person name="Dew I."/>
            <person name="Miller J.R."/>
            <person name="Flanigan M.J."/>
            <person name="Edwards N.J."/>
            <person name="Bolanos R."/>
            <person name="Fasulo D."/>
            <person name="Halldorsson B.V."/>
            <person name="Hannenhalli S."/>
            <person name="Turner R."/>
            <person name="Yooseph S."/>
            <person name="Lu F."/>
            <person name="Nusskern D.R."/>
            <person name="Shue B.C."/>
            <person name="Zheng X.H."/>
            <person name="Zhong F."/>
            <person name="Delcher A.L."/>
            <person name="Huson D.H."/>
            <person name="Kravitz S.A."/>
            <person name="Mouchard L."/>
            <person name="Reinert K."/>
            <person name="Remington K.A."/>
            <person name="Clark A.G."/>
            <person name="Waterman M.S."/>
            <person name="Eichler E.E."/>
            <person name="Adams M.D."/>
            <person name="Hunkapiller M.W."/>
            <person name="Myers E.W."/>
            <person name="Venter J.C."/>
        </authorList>
    </citation>
    <scope>NUCLEOTIDE SEQUENCE [LARGE SCALE GENOMIC DNA]</scope>
</reference>
<reference key="4">
    <citation type="journal article" date="2004" name="Genome Res.">
        <title>The status, quality, and expansion of the NIH full-length cDNA project: the Mammalian Gene Collection (MGC).</title>
        <authorList>
            <consortium name="The MGC Project Team"/>
        </authorList>
    </citation>
    <scope>NUCLEOTIDE SEQUENCE [LARGE SCALE MRNA]</scope>
    <source>
        <tissue>Lung</tissue>
        <tissue>Skin</tissue>
    </source>
</reference>
<reference key="5">
    <citation type="journal article" date="1995" name="Blood">
        <title>Primary structure of human erythrocyte nicotinamide adenine dinucleotide phosphate (NADP[H])-binding protein FX: identification with the mouse tum-transplantation antigen P35B.</title>
        <authorList>
            <person name="Camardella L."/>
            <person name="Carratore V."/>
            <person name="Ciardiello A."/>
            <person name="Damonte G."/>
            <person name="Benatti U."/>
            <person name="De Flora A."/>
        </authorList>
    </citation>
    <scope>PARTIAL PROTEIN SEQUENCE</scope>
    <source>
        <tissue>Erythrocyte</tissue>
    </source>
</reference>
<reference key="6">
    <citation type="journal article" date="2011" name="BMC Syst. Biol.">
        <title>Initial characterization of the human central proteome.</title>
        <authorList>
            <person name="Burkard T.R."/>
            <person name="Planyavsky M."/>
            <person name="Kaupe I."/>
            <person name="Breitwieser F.P."/>
            <person name="Buerckstuemmer T."/>
            <person name="Bennett K.L."/>
            <person name="Superti-Furga G."/>
            <person name="Colinge J."/>
        </authorList>
    </citation>
    <scope>IDENTIFICATION BY MASS SPECTROMETRY [LARGE SCALE ANALYSIS]</scope>
</reference>
<reference key="7">
    <citation type="journal article" date="2014" name="J. Proteomics">
        <title>An enzyme assisted RP-RPLC approach for in-depth analysis of human liver phosphoproteome.</title>
        <authorList>
            <person name="Bian Y."/>
            <person name="Song C."/>
            <person name="Cheng K."/>
            <person name="Dong M."/>
            <person name="Wang F."/>
            <person name="Huang J."/>
            <person name="Sun D."/>
            <person name="Wang L."/>
            <person name="Ye M."/>
            <person name="Zou H."/>
        </authorList>
    </citation>
    <scope>IDENTIFICATION BY MASS SPECTROMETRY [LARGE SCALE ANALYSIS]</scope>
    <source>
        <tissue>Liver</tissue>
    </source>
</reference>
<reference key="8">
    <citation type="journal article" date="2013" name="Acta Biochim. Biophys. Sin.">
        <title>The crystal structure of human GDP-L-fucose synthase.</title>
        <authorList>
            <person name="Zhou H."/>
            <person name="Sun L."/>
            <person name="Li J."/>
            <person name="Xu C."/>
            <person name="Yu F."/>
            <person name="Liu Y."/>
            <person name="Ji C."/>
            <person name="He J."/>
        </authorList>
    </citation>
    <scope>X-RAY CRYSTALLOGRAPHY (2.37 ANGSTROMS) IN COMPLEX WITH NADP</scope>
    <scope>SUBUNIT</scope>
</reference>
<reference key="9">
    <citation type="submission" date="2013-04" db="PDB data bank">
        <title>Crystal structure of human GDP-L-fucose synthase with bound NADP.</title>
        <authorList>
            <consortium name="Structural genomics consortium (SGC)"/>
        </authorList>
    </citation>
    <scope>X-RAY CRYSTALLOGRAPHY (2.70 ANGSTROMS) OF 8-321 IN COMPLEXES WITH GDP AND NADP</scope>
</reference>
<proteinExistence type="evidence at protein level"/>
<organism>
    <name type="scientific">Homo sapiens</name>
    <name type="common">Human</name>
    <dbReference type="NCBI Taxonomy" id="9606"/>
    <lineage>
        <taxon>Eukaryota</taxon>
        <taxon>Metazoa</taxon>
        <taxon>Chordata</taxon>
        <taxon>Craniata</taxon>
        <taxon>Vertebrata</taxon>
        <taxon>Euteleostomi</taxon>
        <taxon>Mammalia</taxon>
        <taxon>Eutheria</taxon>
        <taxon>Euarchontoglires</taxon>
        <taxon>Primates</taxon>
        <taxon>Haplorrhini</taxon>
        <taxon>Catarrhini</taxon>
        <taxon>Hominidae</taxon>
        <taxon>Homo</taxon>
    </lineage>
</organism>
<keyword id="KW-0002">3D-structure</keyword>
<keyword id="KW-0903">Direct protein sequencing</keyword>
<keyword id="KW-0413">Isomerase</keyword>
<keyword id="KW-0511">Multifunctional enzyme</keyword>
<keyword id="KW-0521">NADP</keyword>
<keyword id="KW-0560">Oxidoreductase</keyword>
<keyword id="KW-1267">Proteomics identification</keyword>
<keyword id="KW-1185">Reference proteome</keyword>
<protein>
    <recommendedName>
        <fullName evidence="5">GDP-L-fucose synthase</fullName>
        <ecNumber evidence="3">1.1.1.271</ecNumber>
    </recommendedName>
    <alternativeName>
        <fullName>GDP-4-keto-6-deoxy-D-mannose-3,5-epimerase-4-reductase</fullName>
    </alternativeName>
    <alternativeName>
        <fullName>Protein FX</fullName>
    </alternativeName>
    <alternativeName>
        <fullName>Red cell NADP(H)-binding protein</fullName>
    </alternativeName>
    <alternativeName>
        <fullName>Short-chain dehydrogenase/reductase family 4E member 1</fullName>
    </alternativeName>
</protein>
<evidence type="ECO:0000250" key="1"/>
<evidence type="ECO:0000269" key="2">
    <source>
    </source>
</evidence>
<evidence type="ECO:0000269" key="3">
    <source>
    </source>
</evidence>
<evidence type="ECO:0000269" key="4">
    <source ref="9"/>
</evidence>
<evidence type="ECO:0000305" key="5"/>
<evidence type="ECO:0000305" key="6">
    <source ref="9"/>
</evidence>
<evidence type="ECO:0000312" key="7">
    <source>
        <dbReference type="HGNC" id="HGNC:12390"/>
    </source>
</evidence>
<evidence type="ECO:0007829" key="8">
    <source>
        <dbReference type="PDB" id="4B8W"/>
    </source>
</evidence>
<evidence type="ECO:0007829" key="9">
    <source>
        <dbReference type="PDB" id="4BKP"/>
    </source>
</evidence>
<evidence type="ECO:0007829" key="10">
    <source>
        <dbReference type="PDB" id="4BL5"/>
    </source>
</evidence>
<evidence type="ECO:0007829" key="11">
    <source>
        <dbReference type="PDB" id="4E5Y"/>
    </source>
</evidence>